<name>QUEF_SALHS</name>
<comment type="function">
    <text evidence="1">Catalyzes the NADPH-dependent reduction of 7-cyano-7-deazaguanine (preQ0) to 7-aminomethyl-7-deazaguanine (preQ1).</text>
</comment>
<comment type="catalytic activity">
    <reaction evidence="1">
        <text>7-aminomethyl-7-carbaguanine + 2 NADP(+) = 7-cyano-7-deazaguanine + 2 NADPH + 3 H(+)</text>
        <dbReference type="Rhea" id="RHEA:13409"/>
        <dbReference type="ChEBI" id="CHEBI:15378"/>
        <dbReference type="ChEBI" id="CHEBI:45075"/>
        <dbReference type="ChEBI" id="CHEBI:57783"/>
        <dbReference type="ChEBI" id="CHEBI:58349"/>
        <dbReference type="ChEBI" id="CHEBI:58703"/>
        <dbReference type="EC" id="1.7.1.13"/>
    </reaction>
</comment>
<comment type="pathway">
    <text evidence="1">tRNA modification; tRNA-queuosine biosynthesis.</text>
</comment>
<comment type="subunit">
    <text evidence="1">Homodimer.</text>
</comment>
<comment type="subcellular location">
    <subcellularLocation>
        <location evidence="1">Cytoplasm</location>
    </subcellularLocation>
</comment>
<comment type="similarity">
    <text evidence="1">Belongs to the GTP cyclohydrolase I family. QueF type 2 subfamily.</text>
</comment>
<proteinExistence type="inferred from homology"/>
<reference key="1">
    <citation type="journal article" date="2011" name="J. Bacteriol.">
        <title>Comparative genomics of 28 Salmonella enterica isolates: evidence for CRISPR-mediated adaptive sublineage evolution.</title>
        <authorList>
            <person name="Fricke W.F."/>
            <person name="Mammel M.K."/>
            <person name="McDermott P.F."/>
            <person name="Tartera C."/>
            <person name="White D.G."/>
            <person name="Leclerc J.E."/>
            <person name="Ravel J."/>
            <person name="Cebula T.A."/>
        </authorList>
    </citation>
    <scope>NUCLEOTIDE SEQUENCE [LARGE SCALE GENOMIC DNA]</scope>
    <source>
        <strain>SL476</strain>
    </source>
</reference>
<feature type="chain" id="PRO_1000213079" description="NADPH-dependent 7-cyano-7-deazaguanine reductase">
    <location>
        <begin position="1"/>
        <end position="282"/>
    </location>
</feature>
<feature type="active site" description="Thioimide intermediate" evidence="1">
    <location>
        <position position="190"/>
    </location>
</feature>
<feature type="active site" description="Proton donor" evidence="1">
    <location>
        <position position="197"/>
    </location>
</feature>
<feature type="binding site" evidence="1">
    <location>
        <begin position="88"/>
        <end position="90"/>
    </location>
    <ligand>
        <name>substrate</name>
    </ligand>
</feature>
<feature type="binding site" evidence="1">
    <location>
        <begin position="90"/>
        <end position="91"/>
    </location>
    <ligand>
        <name>NADPH</name>
        <dbReference type="ChEBI" id="CHEBI:57783"/>
    </ligand>
</feature>
<feature type="binding site" evidence="1">
    <location>
        <begin position="229"/>
        <end position="230"/>
    </location>
    <ligand>
        <name>substrate</name>
    </ligand>
</feature>
<feature type="binding site" evidence="1">
    <location>
        <begin position="258"/>
        <end position="259"/>
    </location>
    <ligand>
        <name>NADPH</name>
        <dbReference type="ChEBI" id="CHEBI:57783"/>
    </ligand>
</feature>
<evidence type="ECO:0000255" key="1">
    <source>
        <dbReference type="HAMAP-Rule" id="MF_00817"/>
    </source>
</evidence>
<organism>
    <name type="scientific">Salmonella heidelberg (strain SL476)</name>
    <dbReference type="NCBI Taxonomy" id="454169"/>
    <lineage>
        <taxon>Bacteria</taxon>
        <taxon>Pseudomonadati</taxon>
        <taxon>Pseudomonadota</taxon>
        <taxon>Gammaproteobacteria</taxon>
        <taxon>Enterobacterales</taxon>
        <taxon>Enterobacteriaceae</taxon>
        <taxon>Salmonella</taxon>
    </lineage>
</organism>
<gene>
    <name evidence="1" type="primary">queF</name>
    <name type="ordered locus">SeHA_C3175</name>
</gene>
<keyword id="KW-0963">Cytoplasm</keyword>
<keyword id="KW-0521">NADP</keyword>
<keyword id="KW-0560">Oxidoreductase</keyword>
<keyword id="KW-0671">Queuosine biosynthesis</keyword>
<dbReference type="EC" id="1.7.1.13" evidence="1"/>
<dbReference type="EMBL" id="CP001120">
    <property type="protein sequence ID" value="ACF67507.1"/>
    <property type="molecule type" value="Genomic_DNA"/>
</dbReference>
<dbReference type="RefSeq" id="WP_000100459.1">
    <property type="nucleotide sequence ID" value="NC_011083.1"/>
</dbReference>
<dbReference type="SMR" id="B4TG16"/>
<dbReference type="KEGG" id="seh:SeHA_C3175"/>
<dbReference type="HOGENOM" id="CLU_054738_0_0_6"/>
<dbReference type="UniPathway" id="UPA00392"/>
<dbReference type="Proteomes" id="UP000001866">
    <property type="component" value="Chromosome"/>
</dbReference>
<dbReference type="GO" id="GO:0005737">
    <property type="term" value="C:cytoplasm"/>
    <property type="evidence" value="ECO:0007669"/>
    <property type="project" value="UniProtKB-SubCell"/>
</dbReference>
<dbReference type="GO" id="GO:0033739">
    <property type="term" value="F:preQ1 synthase activity"/>
    <property type="evidence" value="ECO:0007669"/>
    <property type="project" value="UniProtKB-UniRule"/>
</dbReference>
<dbReference type="GO" id="GO:0008616">
    <property type="term" value="P:queuosine biosynthetic process"/>
    <property type="evidence" value="ECO:0007669"/>
    <property type="project" value="UniProtKB-UniRule"/>
</dbReference>
<dbReference type="GO" id="GO:0006400">
    <property type="term" value="P:tRNA modification"/>
    <property type="evidence" value="ECO:0007669"/>
    <property type="project" value="UniProtKB-UniRule"/>
</dbReference>
<dbReference type="FunFam" id="3.30.1130.10:FF:000004">
    <property type="entry name" value="NADPH-dependent 7-cyano-7-deazaguanine reductase"/>
    <property type="match status" value="1"/>
</dbReference>
<dbReference type="Gene3D" id="3.30.1130.10">
    <property type="match status" value="2"/>
</dbReference>
<dbReference type="HAMAP" id="MF_00817">
    <property type="entry name" value="QueF_type2"/>
    <property type="match status" value="1"/>
</dbReference>
<dbReference type="InterPro" id="IPR043133">
    <property type="entry name" value="GTP-CH-I_C/QueF"/>
</dbReference>
<dbReference type="InterPro" id="IPR050084">
    <property type="entry name" value="NADPH_dep_7-cyano-7-deazaG_red"/>
</dbReference>
<dbReference type="InterPro" id="IPR029500">
    <property type="entry name" value="QueF"/>
</dbReference>
<dbReference type="InterPro" id="IPR029139">
    <property type="entry name" value="QueF_N"/>
</dbReference>
<dbReference type="InterPro" id="IPR016428">
    <property type="entry name" value="QueF_type2"/>
</dbReference>
<dbReference type="NCBIfam" id="TIGR03138">
    <property type="entry name" value="QueF"/>
    <property type="match status" value="1"/>
</dbReference>
<dbReference type="PANTHER" id="PTHR34354">
    <property type="entry name" value="NADPH-DEPENDENT 7-CYANO-7-DEAZAGUANINE REDUCTASE"/>
    <property type="match status" value="1"/>
</dbReference>
<dbReference type="PANTHER" id="PTHR34354:SF1">
    <property type="entry name" value="NADPH-DEPENDENT 7-CYANO-7-DEAZAGUANINE REDUCTASE"/>
    <property type="match status" value="1"/>
</dbReference>
<dbReference type="Pfam" id="PF14489">
    <property type="entry name" value="QueF"/>
    <property type="match status" value="1"/>
</dbReference>
<dbReference type="Pfam" id="PF14819">
    <property type="entry name" value="QueF_N"/>
    <property type="match status" value="1"/>
</dbReference>
<dbReference type="PIRSF" id="PIRSF004750">
    <property type="entry name" value="Nitrile_oxidored_YqcD_prd"/>
    <property type="match status" value="1"/>
</dbReference>
<dbReference type="SUPFAM" id="SSF55620">
    <property type="entry name" value="Tetrahydrobiopterin biosynthesis enzymes-like"/>
    <property type="match status" value="1"/>
</dbReference>
<accession>B4TG16</accession>
<sequence>MSSYENHQALDGLTLGKSTDYRDNYDASLLQGVPRSLNRDPLGLTADNLPFHGADIWTLYELSWLNSQGLPQVAVGHVELDYTSVNLIESKSFKLYLNSFNQTRFDTWETVRQTLERDLRACAQGNVSVRLHRLDELEGQPVAHFHGACIDDQDISIDNYQFTTDYLQHAVSGEKQVEETLVSHLLKSNCLITHQPDWGSIQIQYRGRKIDREKLLRYLVSFRHHNEFHEQCVERIFNDILRFCQPETLSVYARYTRRGGLDINPWRSNTDFVPATGRLARQ</sequence>
<protein>
    <recommendedName>
        <fullName evidence="1">NADPH-dependent 7-cyano-7-deazaguanine reductase</fullName>
        <ecNumber evidence="1">1.7.1.13</ecNumber>
    </recommendedName>
    <alternativeName>
        <fullName evidence="1">7-cyano-7-carbaguanine reductase</fullName>
    </alternativeName>
    <alternativeName>
        <fullName evidence="1">NADPH-dependent nitrile oxidoreductase</fullName>
    </alternativeName>
    <alternativeName>
        <fullName evidence="1">PreQ(0) reductase</fullName>
    </alternativeName>
</protein>